<proteinExistence type="inferred from homology"/>
<sequence length="320" mass="35337">MAVVLDLLANDARPRHPEKAHRPDQPIQRKPDWIRVRAPGSPGWAETNRIVREHGLVTVCEEAGCPNIGECWEKKHATFMIMGDTCTRACAFCNVRTGLPQGLDGDEPARVADAVARLGLSHVVITSVDRDDLRDGGAGHFAAVIGAIRQASPGTTIEVLTPDFLRKEGALDVVVAAKPDVFNHNLETVPSKYLTVRPGARYFHSVRLLQRVKELDPTMFTKSGIMVGLGEERNEVLQLMDDLRSAEVDFLTIGQYLQPTKKHHPVKRFVPPDEFRAYETTAYAKGFLLVSATPLTRSSHHAGADFARLKQARLDRLATA</sequence>
<feature type="chain" id="PRO_1000124639" description="Lipoyl synthase">
    <location>
        <begin position="1"/>
        <end position="320"/>
    </location>
</feature>
<feature type="domain" description="Radical SAM core" evidence="2">
    <location>
        <begin position="72"/>
        <end position="288"/>
    </location>
</feature>
<feature type="region of interest" description="Disordered" evidence="3">
    <location>
        <begin position="9"/>
        <end position="31"/>
    </location>
</feature>
<feature type="compositionally biased region" description="Basic and acidic residues" evidence="3">
    <location>
        <begin position="12"/>
        <end position="31"/>
    </location>
</feature>
<feature type="binding site" evidence="1">
    <location>
        <position position="60"/>
    </location>
    <ligand>
        <name>[4Fe-4S] cluster</name>
        <dbReference type="ChEBI" id="CHEBI:49883"/>
        <label>1</label>
    </ligand>
</feature>
<feature type="binding site" evidence="1">
    <location>
        <position position="65"/>
    </location>
    <ligand>
        <name>[4Fe-4S] cluster</name>
        <dbReference type="ChEBI" id="CHEBI:49883"/>
        <label>1</label>
    </ligand>
</feature>
<feature type="binding site" evidence="1">
    <location>
        <position position="71"/>
    </location>
    <ligand>
        <name>[4Fe-4S] cluster</name>
        <dbReference type="ChEBI" id="CHEBI:49883"/>
        <label>1</label>
    </ligand>
</feature>
<feature type="binding site" evidence="1">
    <location>
        <position position="86"/>
    </location>
    <ligand>
        <name>[4Fe-4S] cluster</name>
        <dbReference type="ChEBI" id="CHEBI:49883"/>
        <label>2</label>
        <note>4Fe-4S-S-AdoMet</note>
    </ligand>
</feature>
<feature type="binding site" evidence="1">
    <location>
        <position position="90"/>
    </location>
    <ligand>
        <name>[4Fe-4S] cluster</name>
        <dbReference type="ChEBI" id="CHEBI:49883"/>
        <label>2</label>
        <note>4Fe-4S-S-AdoMet</note>
    </ligand>
</feature>
<feature type="binding site" evidence="1">
    <location>
        <position position="93"/>
    </location>
    <ligand>
        <name>[4Fe-4S] cluster</name>
        <dbReference type="ChEBI" id="CHEBI:49883"/>
        <label>2</label>
        <note>4Fe-4S-S-AdoMet</note>
    </ligand>
</feature>
<feature type="binding site" evidence="1">
    <location>
        <position position="299"/>
    </location>
    <ligand>
        <name>[4Fe-4S] cluster</name>
        <dbReference type="ChEBI" id="CHEBI:49883"/>
        <label>1</label>
    </ligand>
</feature>
<accession>B8IDD6</accession>
<keyword id="KW-0004">4Fe-4S</keyword>
<keyword id="KW-0963">Cytoplasm</keyword>
<keyword id="KW-0408">Iron</keyword>
<keyword id="KW-0411">Iron-sulfur</keyword>
<keyword id="KW-0479">Metal-binding</keyword>
<keyword id="KW-1185">Reference proteome</keyword>
<keyword id="KW-0949">S-adenosyl-L-methionine</keyword>
<keyword id="KW-0808">Transferase</keyword>
<evidence type="ECO:0000255" key="1">
    <source>
        <dbReference type="HAMAP-Rule" id="MF_00206"/>
    </source>
</evidence>
<evidence type="ECO:0000255" key="2">
    <source>
        <dbReference type="PROSITE-ProRule" id="PRU01266"/>
    </source>
</evidence>
<evidence type="ECO:0000256" key="3">
    <source>
        <dbReference type="SAM" id="MobiDB-lite"/>
    </source>
</evidence>
<comment type="function">
    <text evidence="1">Catalyzes the radical-mediated insertion of two sulfur atoms into the C-6 and C-8 positions of the octanoyl moiety bound to the lipoyl domains of lipoate-dependent enzymes, thereby converting the octanoylated domains into lipoylated derivatives.</text>
</comment>
<comment type="catalytic activity">
    <reaction evidence="1">
        <text>[[Fe-S] cluster scaffold protein carrying a second [4Fe-4S](2+) cluster] + N(6)-octanoyl-L-lysyl-[protein] + 2 oxidized [2Fe-2S]-[ferredoxin] + 2 S-adenosyl-L-methionine + 4 H(+) = [[Fe-S] cluster scaffold protein] + N(6)-[(R)-dihydrolipoyl]-L-lysyl-[protein] + 4 Fe(3+) + 2 hydrogen sulfide + 2 5'-deoxyadenosine + 2 L-methionine + 2 reduced [2Fe-2S]-[ferredoxin]</text>
        <dbReference type="Rhea" id="RHEA:16585"/>
        <dbReference type="Rhea" id="RHEA-COMP:9928"/>
        <dbReference type="Rhea" id="RHEA-COMP:10000"/>
        <dbReference type="Rhea" id="RHEA-COMP:10001"/>
        <dbReference type="Rhea" id="RHEA-COMP:10475"/>
        <dbReference type="Rhea" id="RHEA-COMP:14568"/>
        <dbReference type="Rhea" id="RHEA-COMP:14569"/>
        <dbReference type="ChEBI" id="CHEBI:15378"/>
        <dbReference type="ChEBI" id="CHEBI:17319"/>
        <dbReference type="ChEBI" id="CHEBI:29034"/>
        <dbReference type="ChEBI" id="CHEBI:29919"/>
        <dbReference type="ChEBI" id="CHEBI:33722"/>
        <dbReference type="ChEBI" id="CHEBI:33737"/>
        <dbReference type="ChEBI" id="CHEBI:33738"/>
        <dbReference type="ChEBI" id="CHEBI:57844"/>
        <dbReference type="ChEBI" id="CHEBI:59789"/>
        <dbReference type="ChEBI" id="CHEBI:78809"/>
        <dbReference type="ChEBI" id="CHEBI:83100"/>
        <dbReference type="EC" id="2.8.1.8"/>
    </reaction>
</comment>
<comment type="cofactor">
    <cofactor evidence="1">
        <name>[4Fe-4S] cluster</name>
        <dbReference type="ChEBI" id="CHEBI:49883"/>
    </cofactor>
    <text evidence="1">Binds 2 [4Fe-4S] clusters per subunit. One cluster is coordinated with 3 cysteines and an exchangeable S-adenosyl-L-methionine.</text>
</comment>
<comment type="pathway">
    <text evidence="1">Protein modification; protein lipoylation via endogenous pathway; protein N(6)-(lipoyl)lysine from octanoyl-[acyl-carrier-protein]: step 2/2.</text>
</comment>
<comment type="subcellular location">
    <subcellularLocation>
        <location evidence="1">Cytoplasm</location>
    </subcellularLocation>
</comment>
<comment type="similarity">
    <text evidence="1">Belongs to the radical SAM superfamily. Lipoyl synthase family.</text>
</comment>
<name>LIPA_METNO</name>
<reference key="1">
    <citation type="submission" date="2009-01" db="EMBL/GenBank/DDBJ databases">
        <title>Complete sequence of chromosome of Methylobacterium nodulans ORS 2060.</title>
        <authorList>
            <consortium name="US DOE Joint Genome Institute"/>
            <person name="Lucas S."/>
            <person name="Copeland A."/>
            <person name="Lapidus A."/>
            <person name="Glavina del Rio T."/>
            <person name="Dalin E."/>
            <person name="Tice H."/>
            <person name="Bruce D."/>
            <person name="Goodwin L."/>
            <person name="Pitluck S."/>
            <person name="Sims D."/>
            <person name="Brettin T."/>
            <person name="Detter J.C."/>
            <person name="Han C."/>
            <person name="Larimer F."/>
            <person name="Land M."/>
            <person name="Hauser L."/>
            <person name="Kyrpides N."/>
            <person name="Ivanova N."/>
            <person name="Marx C.J."/>
            <person name="Richardson P."/>
        </authorList>
    </citation>
    <scope>NUCLEOTIDE SEQUENCE [LARGE SCALE GENOMIC DNA]</scope>
    <source>
        <strain>LMG 21967 / CNCM I-2342 / ORS 2060</strain>
    </source>
</reference>
<organism>
    <name type="scientific">Methylobacterium nodulans (strain LMG 21967 / CNCM I-2342 / ORS 2060)</name>
    <dbReference type="NCBI Taxonomy" id="460265"/>
    <lineage>
        <taxon>Bacteria</taxon>
        <taxon>Pseudomonadati</taxon>
        <taxon>Pseudomonadota</taxon>
        <taxon>Alphaproteobacteria</taxon>
        <taxon>Hyphomicrobiales</taxon>
        <taxon>Methylobacteriaceae</taxon>
        <taxon>Methylobacterium</taxon>
    </lineage>
</organism>
<gene>
    <name evidence="1" type="primary">lipA</name>
    <name type="ordered locus">Mnod_6533</name>
</gene>
<dbReference type="EC" id="2.8.1.8" evidence="1"/>
<dbReference type="EMBL" id="CP001349">
    <property type="protein sequence ID" value="ACL61302.1"/>
    <property type="molecule type" value="Genomic_DNA"/>
</dbReference>
<dbReference type="RefSeq" id="WP_015932875.1">
    <property type="nucleotide sequence ID" value="NC_011894.1"/>
</dbReference>
<dbReference type="SMR" id="B8IDD6"/>
<dbReference type="STRING" id="460265.Mnod_6533"/>
<dbReference type="KEGG" id="mno:Mnod_6533"/>
<dbReference type="eggNOG" id="COG0320">
    <property type="taxonomic scope" value="Bacteria"/>
</dbReference>
<dbReference type="HOGENOM" id="CLU_033144_2_1_5"/>
<dbReference type="OrthoDB" id="9787898at2"/>
<dbReference type="UniPathway" id="UPA00538">
    <property type="reaction ID" value="UER00593"/>
</dbReference>
<dbReference type="Proteomes" id="UP000008207">
    <property type="component" value="Chromosome"/>
</dbReference>
<dbReference type="GO" id="GO:0005737">
    <property type="term" value="C:cytoplasm"/>
    <property type="evidence" value="ECO:0007669"/>
    <property type="project" value="UniProtKB-SubCell"/>
</dbReference>
<dbReference type="GO" id="GO:0051539">
    <property type="term" value="F:4 iron, 4 sulfur cluster binding"/>
    <property type="evidence" value="ECO:0007669"/>
    <property type="project" value="UniProtKB-UniRule"/>
</dbReference>
<dbReference type="GO" id="GO:0016992">
    <property type="term" value="F:lipoate synthase activity"/>
    <property type="evidence" value="ECO:0007669"/>
    <property type="project" value="UniProtKB-UniRule"/>
</dbReference>
<dbReference type="GO" id="GO:0046872">
    <property type="term" value="F:metal ion binding"/>
    <property type="evidence" value="ECO:0007669"/>
    <property type="project" value="UniProtKB-KW"/>
</dbReference>
<dbReference type="CDD" id="cd01335">
    <property type="entry name" value="Radical_SAM"/>
    <property type="match status" value="1"/>
</dbReference>
<dbReference type="FunFam" id="3.20.20.70:FF:000186">
    <property type="entry name" value="Lipoyl synthase"/>
    <property type="match status" value="1"/>
</dbReference>
<dbReference type="Gene3D" id="3.20.20.70">
    <property type="entry name" value="Aldolase class I"/>
    <property type="match status" value="1"/>
</dbReference>
<dbReference type="HAMAP" id="MF_00206">
    <property type="entry name" value="Lipoyl_synth"/>
    <property type="match status" value="1"/>
</dbReference>
<dbReference type="InterPro" id="IPR013785">
    <property type="entry name" value="Aldolase_TIM"/>
</dbReference>
<dbReference type="InterPro" id="IPR006638">
    <property type="entry name" value="Elp3/MiaA/NifB-like_rSAM"/>
</dbReference>
<dbReference type="InterPro" id="IPR003698">
    <property type="entry name" value="Lipoyl_synth"/>
</dbReference>
<dbReference type="InterPro" id="IPR007197">
    <property type="entry name" value="rSAM"/>
</dbReference>
<dbReference type="NCBIfam" id="TIGR00510">
    <property type="entry name" value="lipA"/>
    <property type="match status" value="1"/>
</dbReference>
<dbReference type="NCBIfam" id="NF004019">
    <property type="entry name" value="PRK05481.1"/>
    <property type="match status" value="1"/>
</dbReference>
<dbReference type="NCBIfam" id="NF009544">
    <property type="entry name" value="PRK12928.1"/>
    <property type="match status" value="1"/>
</dbReference>
<dbReference type="PANTHER" id="PTHR10949">
    <property type="entry name" value="LIPOYL SYNTHASE"/>
    <property type="match status" value="1"/>
</dbReference>
<dbReference type="PANTHER" id="PTHR10949:SF0">
    <property type="entry name" value="LIPOYL SYNTHASE, MITOCHONDRIAL"/>
    <property type="match status" value="1"/>
</dbReference>
<dbReference type="Pfam" id="PF04055">
    <property type="entry name" value="Radical_SAM"/>
    <property type="match status" value="1"/>
</dbReference>
<dbReference type="PIRSF" id="PIRSF005963">
    <property type="entry name" value="Lipoyl_synth"/>
    <property type="match status" value="1"/>
</dbReference>
<dbReference type="SFLD" id="SFLDF00271">
    <property type="entry name" value="lipoyl_synthase"/>
    <property type="match status" value="1"/>
</dbReference>
<dbReference type="SFLD" id="SFLDG01058">
    <property type="entry name" value="lipoyl_synthase_like"/>
    <property type="match status" value="1"/>
</dbReference>
<dbReference type="SMART" id="SM00729">
    <property type="entry name" value="Elp3"/>
    <property type="match status" value="1"/>
</dbReference>
<dbReference type="SUPFAM" id="SSF102114">
    <property type="entry name" value="Radical SAM enzymes"/>
    <property type="match status" value="1"/>
</dbReference>
<dbReference type="PROSITE" id="PS51918">
    <property type="entry name" value="RADICAL_SAM"/>
    <property type="match status" value="1"/>
</dbReference>
<protein>
    <recommendedName>
        <fullName evidence="1">Lipoyl synthase</fullName>
        <ecNumber evidence="1">2.8.1.8</ecNumber>
    </recommendedName>
    <alternativeName>
        <fullName evidence="1">Lip-syn</fullName>
        <shortName evidence="1">LS</shortName>
    </alternativeName>
    <alternativeName>
        <fullName evidence="1">Lipoate synthase</fullName>
    </alternativeName>
    <alternativeName>
        <fullName evidence="1">Lipoic acid synthase</fullName>
    </alternativeName>
    <alternativeName>
        <fullName evidence="1">Sulfur insertion protein LipA</fullName>
    </alternativeName>
</protein>